<feature type="chain" id="PRO_1000196130" description="Large ribosomal subunit protein bL34">
    <location>
        <begin position="1"/>
        <end position="44"/>
    </location>
</feature>
<feature type="region of interest" description="Disordered" evidence="2">
    <location>
        <begin position="1"/>
        <end position="44"/>
    </location>
</feature>
<feature type="compositionally biased region" description="Basic residues" evidence="2">
    <location>
        <begin position="1"/>
        <end position="23"/>
    </location>
</feature>
<feature type="compositionally biased region" description="Basic residues" evidence="2">
    <location>
        <begin position="30"/>
        <end position="44"/>
    </location>
</feature>
<organism>
    <name type="scientific">Thermoanaerobacter pseudethanolicus (strain ATCC 33223 / 39E)</name>
    <name type="common">Clostridium thermohydrosulfuricum</name>
    <dbReference type="NCBI Taxonomy" id="340099"/>
    <lineage>
        <taxon>Bacteria</taxon>
        <taxon>Bacillati</taxon>
        <taxon>Bacillota</taxon>
        <taxon>Clostridia</taxon>
        <taxon>Thermoanaerobacterales</taxon>
        <taxon>Thermoanaerobacteraceae</taxon>
        <taxon>Thermoanaerobacter</taxon>
    </lineage>
</organism>
<name>RL34_THEP3</name>
<sequence length="44" mass="5471">MLRTYQPKKRHRKKVHGFRKRMSTKSGRNVLKRRRQKGRHRLTA</sequence>
<accession>B0K8I4</accession>
<comment type="similarity">
    <text evidence="1">Belongs to the bacterial ribosomal protein bL34 family.</text>
</comment>
<dbReference type="EMBL" id="CP000924">
    <property type="protein sequence ID" value="ABY95916.1"/>
    <property type="molecule type" value="Genomic_DNA"/>
</dbReference>
<dbReference type="RefSeq" id="WP_003867410.1">
    <property type="nucleotide sequence ID" value="NC_010321.1"/>
</dbReference>
<dbReference type="SMR" id="B0K8I4"/>
<dbReference type="STRING" id="340099.Teth39_2295"/>
<dbReference type="KEGG" id="tpd:Teth39_2295"/>
<dbReference type="eggNOG" id="COG0230">
    <property type="taxonomic scope" value="Bacteria"/>
</dbReference>
<dbReference type="HOGENOM" id="CLU_129938_2_0_9"/>
<dbReference type="Proteomes" id="UP000002156">
    <property type="component" value="Chromosome"/>
</dbReference>
<dbReference type="GO" id="GO:1990904">
    <property type="term" value="C:ribonucleoprotein complex"/>
    <property type="evidence" value="ECO:0007669"/>
    <property type="project" value="UniProtKB-KW"/>
</dbReference>
<dbReference type="GO" id="GO:0005840">
    <property type="term" value="C:ribosome"/>
    <property type="evidence" value="ECO:0007669"/>
    <property type="project" value="UniProtKB-KW"/>
</dbReference>
<dbReference type="GO" id="GO:0003735">
    <property type="term" value="F:structural constituent of ribosome"/>
    <property type="evidence" value="ECO:0007669"/>
    <property type="project" value="InterPro"/>
</dbReference>
<dbReference type="GO" id="GO:0006412">
    <property type="term" value="P:translation"/>
    <property type="evidence" value="ECO:0007669"/>
    <property type="project" value="UniProtKB-UniRule"/>
</dbReference>
<dbReference type="FunFam" id="1.10.287.3980:FF:000001">
    <property type="entry name" value="Mitochondrial ribosomal protein L34"/>
    <property type="match status" value="1"/>
</dbReference>
<dbReference type="Gene3D" id="1.10.287.3980">
    <property type="match status" value="1"/>
</dbReference>
<dbReference type="HAMAP" id="MF_00391">
    <property type="entry name" value="Ribosomal_bL34"/>
    <property type="match status" value="1"/>
</dbReference>
<dbReference type="InterPro" id="IPR000271">
    <property type="entry name" value="Ribosomal_bL34"/>
</dbReference>
<dbReference type="NCBIfam" id="TIGR01030">
    <property type="entry name" value="rpmH_bact"/>
    <property type="match status" value="1"/>
</dbReference>
<dbReference type="PANTHER" id="PTHR14503:SF4">
    <property type="entry name" value="LARGE RIBOSOMAL SUBUNIT PROTEIN BL34M"/>
    <property type="match status" value="1"/>
</dbReference>
<dbReference type="PANTHER" id="PTHR14503">
    <property type="entry name" value="MITOCHONDRIAL RIBOSOMAL PROTEIN 34 FAMILY MEMBER"/>
    <property type="match status" value="1"/>
</dbReference>
<dbReference type="Pfam" id="PF00468">
    <property type="entry name" value="Ribosomal_L34"/>
    <property type="match status" value="1"/>
</dbReference>
<keyword id="KW-1185">Reference proteome</keyword>
<keyword id="KW-0687">Ribonucleoprotein</keyword>
<keyword id="KW-0689">Ribosomal protein</keyword>
<protein>
    <recommendedName>
        <fullName evidence="1">Large ribosomal subunit protein bL34</fullName>
    </recommendedName>
    <alternativeName>
        <fullName evidence="3">50S ribosomal protein L34</fullName>
    </alternativeName>
</protein>
<evidence type="ECO:0000255" key="1">
    <source>
        <dbReference type="HAMAP-Rule" id="MF_00391"/>
    </source>
</evidence>
<evidence type="ECO:0000256" key="2">
    <source>
        <dbReference type="SAM" id="MobiDB-lite"/>
    </source>
</evidence>
<evidence type="ECO:0000305" key="3"/>
<reference key="1">
    <citation type="submission" date="2008-01" db="EMBL/GenBank/DDBJ databases">
        <title>Complete sequence of Thermoanaerobacter pseudethanolicus 39E.</title>
        <authorList>
            <person name="Copeland A."/>
            <person name="Lucas S."/>
            <person name="Lapidus A."/>
            <person name="Barry K."/>
            <person name="Glavina del Rio T."/>
            <person name="Dalin E."/>
            <person name="Tice H."/>
            <person name="Pitluck S."/>
            <person name="Bruce D."/>
            <person name="Goodwin L."/>
            <person name="Saunders E."/>
            <person name="Brettin T."/>
            <person name="Detter J.C."/>
            <person name="Han C."/>
            <person name="Schmutz J."/>
            <person name="Larimer F."/>
            <person name="Land M."/>
            <person name="Hauser L."/>
            <person name="Kyrpides N."/>
            <person name="Lykidis A."/>
            <person name="Hemme C."/>
            <person name="Fields M.W."/>
            <person name="He Z."/>
            <person name="Zhou J."/>
            <person name="Richardson P."/>
        </authorList>
    </citation>
    <scope>NUCLEOTIDE SEQUENCE [LARGE SCALE GENOMIC DNA]</scope>
    <source>
        <strain>ATCC 33223 / DSM 2355 / 39E</strain>
    </source>
</reference>
<gene>
    <name evidence="1" type="primary">rpmH</name>
    <name type="ordered locus">Teth39_2295</name>
</gene>
<proteinExistence type="inferred from homology"/>